<geneLocation type="chloroplast"/>
<comment type="function">
    <text evidence="1">May help in the organization of the PsaL subunit.</text>
</comment>
<comment type="subcellular location">
    <subcellularLocation>
        <location evidence="1">Plastid</location>
        <location evidence="1">Chloroplast thylakoid membrane</location>
        <topology evidence="1">Single-pass membrane protein</topology>
    </subcellularLocation>
</comment>
<comment type="similarity">
    <text evidence="1">Belongs to the PsaI family.</text>
</comment>
<proteinExistence type="inferred from homology"/>
<feature type="chain" id="PRO_0000194638" description="Photosystem I reaction center subunit VIII">
    <location>
        <begin position="1"/>
        <end position="36"/>
    </location>
</feature>
<feature type="transmembrane region" description="Helical" evidence="1">
    <location>
        <begin position="10"/>
        <end position="29"/>
    </location>
</feature>
<keyword id="KW-0150">Chloroplast</keyword>
<keyword id="KW-0472">Membrane</keyword>
<keyword id="KW-0602">Photosynthesis</keyword>
<keyword id="KW-0603">Photosystem I</keyword>
<keyword id="KW-0934">Plastid</keyword>
<keyword id="KW-0793">Thylakoid</keyword>
<keyword id="KW-0812">Transmembrane</keyword>
<keyword id="KW-1133">Transmembrane helix</keyword>
<dbReference type="EMBL" id="AB180926">
    <property type="protein sequence ID" value="BAD22550.1"/>
    <property type="molecule type" value="Genomic_DNA"/>
</dbReference>
<dbReference type="RefSeq" id="YP_008474400.1">
    <property type="nucleotide sequence ID" value="NC_022135.1"/>
</dbReference>
<dbReference type="SMR" id="Q6L603"/>
<dbReference type="GeneID" id="65348721"/>
<dbReference type="GO" id="GO:0009535">
    <property type="term" value="C:chloroplast thylakoid membrane"/>
    <property type="evidence" value="ECO:0007669"/>
    <property type="project" value="UniProtKB-SubCell"/>
</dbReference>
<dbReference type="GO" id="GO:0009522">
    <property type="term" value="C:photosystem I"/>
    <property type="evidence" value="ECO:0007669"/>
    <property type="project" value="UniProtKB-KW"/>
</dbReference>
<dbReference type="GO" id="GO:0015979">
    <property type="term" value="P:photosynthesis"/>
    <property type="evidence" value="ECO:0007669"/>
    <property type="project" value="UniProtKB-UniRule"/>
</dbReference>
<dbReference type="HAMAP" id="MF_00431">
    <property type="entry name" value="PSI_PsaI"/>
    <property type="match status" value="1"/>
</dbReference>
<dbReference type="InterPro" id="IPR001302">
    <property type="entry name" value="PSI_PsaI"/>
</dbReference>
<dbReference type="InterPro" id="IPR036357">
    <property type="entry name" value="PSI_PsaI_sf"/>
</dbReference>
<dbReference type="NCBIfam" id="TIGR03052">
    <property type="entry name" value="PS_I_psaI"/>
    <property type="match status" value="1"/>
</dbReference>
<dbReference type="PANTHER" id="PTHR35775">
    <property type="match status" value="1"/>
</dbReference>
<dbReference type="PANTHER" id="PTHR35775:SF2">
    <property type="entry name" value="PHOTOSYSTEM I REACTION CENTER SUBUNIT VIII"/>
    <property type="match status" value="1"/>
</dbReference>
<dbReference type="Pfam" id="PF00796">
    <property type="entry name" value="PSI_8"/>
    <property type="match status" value="1"/>
</dbReference>
<dbReference type="SUPFAM" id="SSF81540">
    <property type="entry name" value="Subunit VIII of photosystem I reaction centre, PsaI"/>
    <property type="match status" value="1"/>
</dbReference>
<reference key="1">
    <citation type="submission" date="2004-06" db="EMBL/GenBank/DDBJ databases">
        <title>Large recurrent deletions in a hotspot region of chloroplast genomes account for length variations of common wheat and its relative, Aegilops.</title>
        <authorList>
            <person name="Guo C."/>
            <person name="Terachi T."/>
        </authorList>
    </citation>
    <scope>NUCLEOTIDE SEQUENCE [GENOMIC DNA]</scope>
</reference>
<gene>
    <name evidence="1" type="primary">psaI</name>
</gene>
<organism>
    <name type="scientific">Aegilops speltoides</name>
    <name type="common">Goatgrass</name>
    <name type="synonym">Triticum speltoides</name>
    <dbReference type="NCBI Taxonomy" id="4573"/>
    <lineage>
        <taxon>Eukaryota</taxon>
        <taxon>Viridiplantae</taxon>
        <taxon>Streptophyta</taxon>
        <taxon>Embryophyta</taxon>
        <taxon>Tracheophyta</taxon>
        <taxon>Spermatophyta</taxon>
        <taxon>Magnoliopsida</taxon>
        <taxon>Liliopsida</taxon>
        <taxon>Poales</taxon>
        <taxon>Poaceae</taxon>
        <taxon>BOP clade</taxon>
        <taxon>Pooideae</taxon>
        <taxon>Triticodae</taxon>
        <taxon>Triticeae</taxon>
        <taxon>Triticinae</taxon>
        <taxon>Aegilops</taxon>
    </lineage>
</organism>
<evidence type="ECO:0000255" key="1">
    <source>
        <dbReference type="HAMAP-Rule" id="MF_00431"/>
    </source>
</evidence>
<accession>Q6L603</accession>
<name>PSAI_AEGSP</name>
<sequence length="36" mass="3994">MTDLNLPSIFVPLVGLVFPAIAMTSLFLYVQKNKIV</sequence>
<protein>
    <recommendedName>
        <fullName evidence="1">Photosystem I reaction center subunit VIII</fullName>
        <shortName evidence="1">PSI-I</shortName>
    </recommendedName>
</protein>